<keyword id="KW-0997">Cell inner membrane</keyword>
<keyword id="KW-1003">Cell membrane</keyword>
<keyword id="KW-0472">Membrane</keyword>
<keyword id="KW-0812">Transmembrane</keyword>
<keyword id="KW-1133">Transmembrane helix</keyword>
<keyword id="KW-0813">Transport</keyword>
<reference key="1">
    <citation type="journal article" date="2009" name="PLoS Genet.">
        <title>Organised genome dynamics in the Escherichia coli species results in highly diverse adaptive paths.</title>
        <authorList>
            <person name="Touchon M."/>
            <person name="Hoede C."/>
            <person name="Tenaillon O."/>
            <person name="Barbe V."/>
            <person name="Baeriswyl S."/>
            <person name="Bidet P."/>
            <person name="Bingen E."/>
            <person name="Bonacorsi S."/>
            <person name="Bouchier C."/>
            <person name="Bouvet O."/>
            <person name="Calteau A."/>
            <person name="Chiapello H."/>
            <person name="Clermont O."/>
            <person name="Cruveiller S."/>
            <person name="Danchin A."/>
            <person name="Diard M."/>
            <person name="Dossat C."/>
            <person name="Karoui M.E."/>
            <person name="Frapy E."/>
            <person name="Garry L."/>
            <person name="Ghigo J.M."/>
            <person name="Gilles A.M."/>
            <person name="Johnson J."/>
            <person name="Le Bouguenec C."/>
            <person name="Lescat M."/>
            <person name="Mangenot S."/>
            <person name="Martinez-Jehanne V."/>
            <person name="Matic I."/>
            <person name="Nassif X."/>
            <person name="Oztas S."/>
            <person name="Petit M.A."/>
            <person name="Pichon C."/>
            <person name="Rouy Z."/>
            <person name="Ruf C.S."/>
            <person name="Schneider D."/>
            <person name="Tourret J."/>
            <person name="Vacherie B."/>
            <person name="Vallenet D."/>
            <person name="Medigue C."/>
            <person name="Rocha E.P.C."/>
            <person name="Denamur E."/>
        </authorList>
    </citation>
    <scope>NUCLEOTIDE SEQUENCE [LARGE SCALE GENOMIC DNA]</scope>
    <source>
        <strain>UMN026 / ExPEC</strain>
    </source>
</reference>
<name>MDTD_ECOLU</name>
<comment type="subcellular location">
    <subcellularLocation>
        <location evidence="1">Cell inner membrane</location>
        <topology evidence="1">Multi-pass membrane protein</topology>
    </subcellularLocation>
</comment>
<comment type="similarity">
    <text evidence="1">Belongs to the major facilitator superfamily. TCR/Tet family.</text>
</comment>
<protein>
    <recommendedName>
        <fullName evidence="1">Putative multidrug resistance protein MdtD</fullName>
    </recommendedName>
</protein>
<sequence length="471" mass="50994">MTDLPDNTRWQLWIVAFGFFMQSLDTTIVNTALPSMAQSLGESPLHMHMVIVSYVLTVAVMLPASGWLADKVGVRNIFFTAIVLFTLGSLFCALSGTLNELLLARALQGVGGAMMVPVGRLTVMKIVPREQYMAAMTFVTLPGQVGPLLGPALGGLLVEYASWHWIFLINIPVGIIGAIATLMLMPNYTMQTRRFDLSGFLLLAIGMAVLTLALDGSKGTGLSPLAITGLVAVGVVALVLYLLHARNNNRALFSLKLFRTRTFSLGLAGSFAGRIGSGMLPFMTPVFLQIGLGFSPFHAGLMMIPMVLGSMGMKRIVVQVVNRFGYRRVLVATTLGLSLVTLLFMTTALLGWYYVLPFVLFLQGMVNSTRFSSMNTLTLKDLPDNLASSGNSLLSMIMQLSMSIGVTIAGLLLGLFGSQHVSVDSGTTQTVFMYTWLSMAFIIALPAFIFARVPNDTHQNVAISRRKRSAQ</sequence>
<feature type="chain" id="PRO_1000200774" description="Putative multidrug resistance protein MdtD">
    <location>
        <begin position="1"/>
        <end position="471"/>
    </location>
</feature>
<feature type="topological domain" description="Periplasmic" evidence="1">
    <location>
        <begin position="1"/>
        <end position="11"/>
    </location>
</feature>
<feature type="transmembrane region" description="Helical" evidence="1">
    <location>
        <begin position="12"/>
        <end position="32"/>
    </location>
</feature>
<feature type="topological domain" description="Cytoplasmic" evidence="1">
    <location>
        <begin position="33"/>
        <end position="48"/>
    </location>
</feature>
<feature type="transmembrane region" description="Helical" evidence="1">
    <location>
        <begin position="49"/>
        <end position="69"/>
    </location>
</feature>
<feature type="topological domain" description="Periplasmic" evidence="1">
    <location>
        <begin position="70"/>
        <end position="76"/>
    </location>
</feature>
<feature type="transmembrane region" description="Helical" evidence="1">
    <location>
        <begin position="77"/>
        <end position="97"/>
    </location>
</feature>
<feature type="topological domain" description="Cytoplasmic" evidence="1">
    <location>
        <begin position="98"/>
        <end position="101"/>
    </location>
</feature>
<feature type="transmembrane region" description="Helical" evidence="1">
    <location>
        <begin position="102"/>
        <end position="124"/>
    </location>
</feature>
<feature type="topological domain" description="Periplasmic" evidence="1">
    <location>
        <begin position="125"/>
        <end position="137"/>
    </location>
</feature>
<feature type="transmembrane region" description="Helical" evidence="1">
    <location>
        <begin position="138"/>
        <end position="158"/>
    </location>
</feature>
<feature type="topological domain" description="Cytoplasmic" evidence="1">
    <location>
        <begin position="159"/>
        <end position="164"/>
    </location>
</feature>
<feature type="transmembrane region" description="Helical" evidence="1">
    <location>
        <begin position="165"/>
        <end position="185"/>
    </location>
</feature>
<feature type="topological domain" description="Periplasmic" evidence="1">
    <location>
        <begin position="186"/>
        <end position="196"/>
    </location>
</feature>
<feature type="transmembrane region" description="Helical" evidence="1">
    <location>
        <begin position="197"/>
        <end position="217"/>
    </location>
</feature>
<feature type="topological domain" description="Cytoplasmic" evidence="1">
    <location>
        <begin position="218"/>
        <end position="224"/>
    </location>
</feature>
<feature type="transmembrane region" description="Helical" evidence="1">
    <location>
        <begin position="225"/>
        <end position="245"/>
    </location>
</feature>
<feature type="topological domain" description="Periplasmic" evidence="1">
    <location>
        <begin position="246"/>
        <end position="262"/>
    </location>
</feature>
<feature type="transmembrane region" description="Helical" evidence="1">
    <location>
        <begin position="263"/>
        <end position="283"/>
    </location>
</feature>
<feature type="topological domain" description="Cytoplasmic" evidence="1">
    <location>
        <begin position="284"/>
        <end position="285"/>
    </location>
</feature>
<feature type="transmembrane region" description="Helical" evidence="1">
    <location>
        <begin position="286"/>
        <end position="306"/>
    </location>
</feature>
<feature type="topological domain" description="Periplasmic" evidence="1">
    <location>
        <begin position="307"/>
        <end position="341"/>
    </location>
</feature>
<feature type="transmembrane region" description="Helical" evidence="1">
    <location>
        <begin position="342"/>
        <end position="362"/>
    </location>
</feature>
<feature type="topological domain" description="Cytoplasmic" evidence="1">
    <location>
        <begin position="363"/>
        <end position="395"/>
    </location>
</feature>
<feature type="transmembrane region" description="Helical" evidence="1">
    <location>
        <begin position="396"/>
        <end position="416"/>
    </location>
</feature>
<feature type="topological domain" description="Periplasmic" evidence="1">
    <location>
        <begin position="417"/>
        <end position="430"/>
    </location>
</feature>
<feature type="transmembrane region" description="Helical" evidence="1">
    <location>
        <begin position="431"/>
        <end position="451"/>
    </location>
</feature>
<feature type="topological domain" description="Cytoplasmic" evidence="1">
    <location>
        <begin position="452"/>
        <end position="471"/>
    </location>
</feature>
<proteinExistence type="inferred from homology"/>
<dbReference type="EMBL" id="CU928163">
    <property type="protein sequence ID" value="CAR13603.1"/>
    <property type="molecule type" value="Genomic_DNA"/>
</dbReference>
<dbReference type="RefSeq" id="WP_000130817.1">
    <property type="nucleotide sequence ID" value="NC_011751.1"/>
</dbReference>
<dbReference type="RefSeq" id="YP_002413131.1">
    <property type="nucleotide sequence ID" value="NC_011751.1"/>
</dbReference>
<dbReference type="SMR" id="B7NCB3"/>
<dbReference type="STRING" id="585056.ECUMN_2415"/>
<dbReference type="KEGG" id="eum:ECUMN_2415"/>
<dbReference type="PATRIC" id="fig|585056.7.peg.2596"/>
<dbReference type="HOGENOM" id="CLU_000960_28_0_6"/>
<dbReference type="Proteomes" id="UP000007097">
    <property type="component" value="Chromosome"/>
</dbReference>
<dbReference type="GO" id="GO:0005886">
    <property type="term" value="C:plasma membrane"/>
    <property type="evidence" value="ECO:0007669"/>
    <property type="project" value="UniProtKB-SubCell"/>
</dbReference>
<dbReference type="GO" id="GO:0022857">
    <property type="term" value="F:transmembrane transporter activity"/>
    <property type="evidence" value="ECO:0007669"/>
    <property type="project" value="UniProtKB-UniRule"/>
</dbReference>
<dbReference type="CDD" id="cd17503">
    <property type="entry name" value="MFS_LmrB_MDR_like"/>
    <property type="match status" value="1"/>
</dbReference>
<dbReference type="FunFam" id="1.20.1250.20:FF:000021">
    <property type="entry name" value="Putative multidrug resistance protein MdtD"/>
    <property type="match status" value="1"/>
</dbReference>
<dbReference type="FunFam" id="1.20.1720.10:FF:000001">
    <property type="entry name" value="Putative multidrug resistance protein MdtD"/>
    <property type="match status" value="1"/>
</dbReference>
<dbReference type="Gene3D" id="1.20.1250.20">
    <property type="entry name" value="MFS general substrate transporter like domains"/>
    <property type="match status" value="1"/>
</dbReference>
<dbReference type="Gene3D" id="1.20.1720.10">
    <property type="entry name" value="Multidrug resistance protein D"/>
    <property type="match status" value="1"/>
</dbReference>
<dbReference type="HAMAP" id="MF_01577">
    <property type="entry name" value="MFS_MdtD"/>
    <property type="match status" value="1"/>
</dbReference>
<dbReference type="InterPro" id="IPR004638">
    <property type="entry name" value="EmrB-like"/>
</dbReference>
<dbReference type="InterPro" id="IPR011701">
    <property type="entry name" value="MFS"/>
</dbReference>
<dbReference type="InterPro" id="IPR020846">
    <property type="entry name" value="MFS_dom"/>
</dbReference>
<dbReference type="InterPro" id="IPR036259">
    <property type="entry name" value="MFS_trans_sf"/>
</dbReference>
<dbReference type="InterPro" id="IPR023721">
    <property type="entry name" value="Multi-R_MdtD"/>
</dbReference>
<dbReference type="NCBIfam" id="TIGR00711">
    <property type="entry name" value="efflux_EmrB"/>
    <property type="match status" value="1"/>
</dbReference>
<dbReference type="NCBIfam" id="NF007799">
    <property type="entry name" value="PRK10504.1"/>
    <property type="match status" value="1"/>
</dbReference>
<dbReference type="PANTHER" id="PTHR42718:SF46">
    <property type="entry name" value="BLR6921 PROTEIN"/>
    <property type="match status" value="1"/>
</dbReference>
<dbReference type="PANTHER" id="PTHR42718">
    <property type="entry name" value="MAJOR FACILITATOR SUPERFAMILY MULTIDRUG TRANSPORTER MFSC"/>
    <property type="match status" value="1"/>
</dbReference>
<dbReference type="Pfam" id="PF07690">
    <property type="entry name" value="MFS_1"/>
    <property type="match status" value="1"/>
</dbReference>
<dbReference type="PRINTS" id="PR01036">
    <property type="entry name" value="TCRTETB"/>
</dbReference>
<dbReference type="SUPFAM" id="SSF103473">
    <property type="entry name" value="MFS general substrate transporter"/>
    <property type="match status" value="1"/>
</dbReference>
<dbReference type="PROSITE" id="PS50850">
    <property type="entry name" value="MFS"/>
    <property type="match status" value="1"/>
</dbReference>
<accession>B7NCB3</accession>
<evidence type="ECO:0000255" key="1">
    <source>
        <dbReference type="HAMAP-Rule" id="MF_01577"/>
    </source>
</evidence>
<gene>
    <name evidence="1" type="primary">mdtD</name>
    <name type="ordered locus">ECUMN_2415</name>
</gene>
<organism>
    <name type="scientific">Escherichia coli O17:K52:H18 (strain UMN026 / ExPEC)</name>
    <dbReference type="NCBI Taxonomy" id="585056"/>
    <lineage>
        <taxon>Bacteria</taxon>
        <taxon>Pseudomonadati</taxon>
        <taxon>Pseudomonadota</taxon>
        <taxon>Gammaproteobacteria</taxon>
        <taxon>Enterobacterales</taxon>
        <taxon>Enterobacteriaceae</taxon>
        <taxon>Escherichia</taxon>
    </lineage>
</organism>